<evidence type="ECO:0000250" key="1"/>
<evidence type="ECO:0000255" key="2">
    <source>
        <dbReference type="PROSITE-ProRule" id="PRU00108"/>
    </source>
</evidence>
<evidence type="ECO:0000256" key="3">
    <source>
        <dbReference type="SAM" id="MobiDB-lite"/>
    </source>
</evidence>
<evidence type="ECO:0000269" key="4">
    <source>
    </source>
</evidence>
<evidence type="ECO:0000269" key="5">
    <source>
    </source>
</evidence>
<evidence type="ECO:0000305" key="6"/>
<feature type="chain" id="PRO_0000261424" description="Homeobox protein NANOGP8">
    <location>
        <begin position="1"/>
        <end position="305"/>
    </location>
</feature>
<feature type="repeat" description="1">
    <location>
        <begin position="196"/>
        <end position="200"/>
    </location>
</feature>
<feature type="repeat" description="2">
    <location>
        <begin position="201"/>
        <end position="205"/>
    </location>
</feature>
<feature type="repeat" description="3">
    <location>
        <begin position="206"/>
        <end position="210"/>
    </location>
</feature>
<feature type="repeat" description="4">
    <location>
        <begin position="216"/>
        <end position="220"/>
    </location>
</feature>
<feature type="repeat" description="5">
    <location>
        <begin position="221"/>
        <end position="225"/>
    </location>
</feature>
<feature type="repeat" description="6">
    <location>
        <begin position="226"/>
        <end position="230"/>
    </location>
</feature>
<feature type="repeat" description="7">
    <location>
        <begin position="231"/>
        <end position="235"/>
    </location>
</feature>
<feature type="repeat" description="8">
    <location>
        <begin position="236"/>
        <end position="240"/>
    </location>
</feature>
<feature type="DNA-binding region" description="Homeobox" evidence="2">
    <location>
        <begin position="95"/>
        <end position="154"/>
    </location>
</feature>
<feature type="region of interest" description="Disordered" evidence="3">
    <location>
        <begin position="1"/>
        <end position="96"/>
    </location>
</feature>
<feature type="region of interest" description="8 X repeats starting with a Trp in each unit">
    <location>
        <begin position="196"/>
        <end position="240"/>
    </location>
</feature>
<feature type="region of interest" description="Sufficient for transactivation activity" evidence="1">
    <location>
        <begin position="196"/>
        <end position="240"/>
    </location>
</feature>
<feature type="region of interest" description="Sufficient for strong transactivation activity" evidence="1">
    <location>
        <begin position="241"/>
        <end position="305"/>
    </location>
</feature>
<feature type="compositionally biased region" description="Polar residues" evidence="3">
    <location>
        <begin position="65"/>
        <end position="82"/>
    </location>
</feature>
<feature type="sequence variant" id="VAR_080142" evidence="5">
    <original>C</original>
    <variation>R</variation>
    <location>
        <position position="13"/>
    </location>
</feature>
<feature type="sequence variant" id="VAR_080143" description="Found in ethnically diverse individuals; dbSNP:rs2004079." evidence="5">
    <original>E</original>
    <variation>A</variation>
    <location>
        <position position="16"/>
    </location>
</feature>
<feature type="sequence variant" id="VAR_080144" evidence="5">
    <original>S</original>
    <variation>P</variation>
    <location>
        <position position="37"/>
    </location>
</feature>
<feature type="sequence variant" id="VAR_080145" description="In dbSNP:rs2257251." evidence="5">
    <original>D</original>
    <variation>Y</variation>
    <location>
        <position position="64"/>
    </location>
</feature>
<feature type="sequence variant" id="VAR_080146" description="In dbSNP:rs146363687." evidence="5">
    <original>S</original>
    <variation>Y</variation>
    <location>
        <position position="68"/>
    </location>
</feature>
<feature type="sequence variant" id="VAR_080147" evidence="5">
    <original>Q</original>
    <variation>R</variation>
    <location>
        <position position="96"/>
    </location>
</feature>
<feature type="sequence variant" id="VAR_080148" description="In dbSNP:rs1012377776." evidence="5">
    <original>L</original>
    <variation>P</variation>
    <location>
        <position position="107"/>
    </location>
</feature>
<feature type="sequence variant" id="VAR_080149" evidence="5">
    <original>E</original>
    <variation>G</variation>
    <location>
        <position position="127"/>
    </location>
</feature>
<feature type="sequence variant" id="VAR_080150" evidence="5">
    <original>Q</original>
    <variation>R</variation>
    <location>
        <position position="146"/>
    </location>
</feature>
<feature type="sequence variant" id="VAR_080151" evidence="5">
    <original>S</original>
    <variation>G</variation>
    <location>
        <position position="207"/>
    </location>
</feature>
<feature type="sequence variant" id="VAR_080152" evidence="5">
    <original>N</original>
    <variation>S</variation>
    <location>
        <position position="208"/>
    </location>
</feature>
<feature type="sequence variant" id="VAR_080153" description="In dbSNP:rs9944179." evidence="5">
    <original>T</original>
    <variation>I</variation>
    <location>
        <position position="210"/>
    </location>
</feature>
<feature type="sequence variant" id="VAR_080154" evidence="5">
    <original>N</original>
    <variation>S</variation>
    <location>
        <position position="218"/>
    </location>
</feature>
<feature type="sequence variant" id="VAR_080155" description="In dbSNP:rs1326719179." evidence="5">
    <original>D</original>
    <variation>G</variation>
    <location>
        <position position="262"/>
    </location>
</feature>
<feature type="sequence variant" id="VAR_080156" evidence="5">
    <original>Q</original>
    <variation>R</variation>
    <location>
        <position position="301"/>
    </location>
</feature>
<protein>
    <recommendedName>
        <fullName>Homeobox protein NANOGP8</fullName>
    </recommendedName>
</protein>
<organism>
    <name type="scientific">Homo sapiens</name>
    <name type="common">Human</name>
    <dbReference type="NCBI Taxonomy" id="9606"/>
    <lineage>
        <taxon>Eukaryota</taxon>
        <taxon>Metazoa</taxon>
        <taxon>Chordata</taxon>
        <taxon>Craniata</taxon>
        <taxon>Vertebrata</taxon>
        <taxon>Euteleostomi</taxon>
        <taxon>Mammalia</taxon>
        <taxon>Eutheria</taxon>
        <taxon>Euarchontoglires</taxon>
        <taxon>Primates</taxon>
        <taxon>Haplorrhini</taxon>
        <taxon>Catarrhini</taxon>
        <taxon>Hominidae</taxon>
        <taxon>Homo</taxon>
    </lineage>
</organism>
<name>NANP8_HUMAN</name>
<proteinExistence type="evidence at transcript level"/>
<keyword id="KW-0238">DNA-binding</keyword>
<keyword id="KW-0371">Homeobox</keyword>
<keyword id="KW-0539">Nucleus</keyword>
<keyword id="KW-1185">Reference proteome</keyword>
<keyword id="KW-0677">Repeat</keyword>
<keyword id="KW-0804">Transcription</keyword>
<keyword id="KW-0805">Transcription regulation</keyword>
<accession>Q6NSW7</accession>
<accession>J7H3Y9</accession>
<accession>J7H3Z5</accession>
<accession>J7H408</accession>
<accession>J7H412</accession>
<accession>J7H416</accession>
<accession>J7H738</accession>
<accession>J7H745</accession>
<accession>J7H749</accession>
<accession>J7H9S6</accession>
<accession>J7H9T4</accession>
<accession>J7HAW9</accession>
<accession>J7HAX1</accession>
<accession>J7HAX8</accession>
<reference key="1">
    <citation type="journal article" date="2006" name="FEBS J.">
        <title>NANOGP8 is a retrogene expressed in cancers.</title>
        <authorList>
            <person name="Zhang J."/>
            <person name="Wang X."/>
            <person name="Li M."/>
            <person name="Han J."/>
            <person name="Chen B."/>
            <person name="Wang B."/>
            <person name="Dai J."/>
        </authorList>
    </citation>
    <scope>NUCLEOTIDE SEQUENCE [MRNA]</scope>
    <scope>VARIANT ALA-16</scope>
    <scope>FUNCTION</scope>
    <scope>SUBCELLULAR LOCATION</scope>
    <source>
        <tissue>Urinary bladder carcinoma</tissue>
    </source>
</reference>
<reference key="2">
    <citation type="journal article" date="2012" name="G3 (Bethesda)">
        <title>NANOGP8: evolution of a human-specific retro-oncogene.</title>
        <authorList>
            <person name="Fairbanks D.J."/>
            <person name="Fairbanks A.D."/>
            <person name="Ogden T.H."/>
            <person name="Parker G.J."/>
            <person name="Maughan P.J."/>
        </authorList>
    </citation>
    <scope>NUCLEOTIDE SEQUENCE [GENOMIC DNA]</scope>
    <scope>VARIANTS ARG-13; ALA-16; PRO-37; TYR-64; TYR-68; ARG-96; PRO-107; GLY-127; ARG-146; GLY-207; SER-208; ILE-210; SER-218; GLY-262 AND ARG-301</scope>
</reference>
<reference key="3">
    <citation type="journal article" date="2006" name="Nature">
        <title>Analysis of the DNA sequence and duplication history of human chromosome 15.</title>
        <authorList>
            <person name="Zody M.C."/>
            <person name="Garber M."/>
            <person name="Sharpe T."/>
            <person name="Young S.K."/>
            <person name="Rowen L."/>
            <person name="O'Neill K."/>
            <person name="Whittaker C.A."/>
            <person name="Kamal M."/>
            <person name="Chang J.L."/>
            <person name="Cuomo C.A."/>
            <person name="Dewar K."/>
            <person name="FitzGerald M.G."/>
            <person name="Kodira C.D."/>
            <person name="Madan A."/>
            <person name="Qin S."/>
            <person name="Yang X."/>
            <person name="Abbasi N."/>
            <person name="Abouelleil A."/>
            <person name="Arachchi H.M."/>
            <person name="Baradarani L."/>
            <person name="Birditt B."/>
            <person name="Bloom S."/>
            <person name="Bloom T."/>
            <person name="Borowsky M.L."/>
            <person name="Burke J."/>
            <person name="Butler J."/>
            <person name="Cook A."/>
            <person name="DeArellano K."/>
            <person name="DeCaprio D."/>
            <person name="Dorris L. III"/>
            <person name="Dors M."/>
            <person name="Eichler E.E."/>
            <person name="Engels R."/>
            <person name="Fahey J."/>
            <person name="Fleetwood P."/>
            <person name="Friedman C."/>
            <person name="Gearin G."/>
            <person name="Hall J.L."/>
            <person name="Hensley G."/>
            <person name="Johnson E."/>
            <person name="Jones C."/>
            <person name="Kamat A."/>
            <person name="Kaur A."/>
            <person name="Locke D.P."/>
            <person name="Madan A."/>
            <person name="Munson G."/>
            <person name="Jaffe D.B."/>
            <person name="Lui A."/>
            <person name="Macdonald P."/>
            <person name="Mauceli E."/>
            <person name="Naylor J.W."/>
            <person name="Nesbitt R."/>
            <person name="Nicol R."/>
            <person name="O'Leary S.B."/>
            <person name="Ratcliffe A."/>
            <person name="Rounsley S."/>
            <person name="She X."/>
            <person name="Sneddon K.M.B."/>
            <person name="Stewart S."/>
            <person name="Sougnez C."/>
            <person name="Stone S.M."/>
            <person name="Topham K."/>
            <person name="Vincent D."/>
            <person name="Wang S."/>
            <person name="Zimmer A.R."/>
            <person name="Birren B.W."/>
            <person name="Hood L."/>
            <person name="Lander E.S."/>
            <person name="Nusbaum C."/>
        </authorList>
    </citation>
    <scope>NUCLEOTIDE SEQUENCE [LARGE SCALE GENOMIC DNA]</scope>
</reference>
<reference key="4">
    <citation type="submission" date="2005-07" db="EMBL/GenBank/DDBJ databases">
        <authorList>
            <person name="Mural R.J."/>
            <person name="Istrail S."/>
            <person name="Sutton G."/>
            <person name="Florea L."/>
            <person name="Halpern A.L."/>
            <person name="Mobarry C.M."/>
            <person name="Lippert R."/>
            <person name="Walenz B."/>
            <person name="Shatkay H."/>
            <person name="Dew I."/>
            <person name="Miller J.R."/>
            <person name="Flanigan M.J."/>
            <person name="Edwards N.J."/>
            <person name="Bolanos R."/>
            <person name="Fasulo D."/>
            <person name="Halldorsson B.V."/>
            <person name="Hannenhalli S."/>
            <person name="Turner R."/>
            <person name="Yooseph S."/>
            <person name="Lu F."/>
            <person name="Nusskern D.R."/>
            <person name="Shue B.C."/>
            <person name="Zheng X.H."/>
            <person name="Zhong F."/>
            <person name="Delcher A.L."/>
            <person name="Huson D.H."/>
            <person name="Kravitz S.A."/>
            <person name="Mouchard L."/>
            <person name="Reinert K."/>
            <person name="Remington K.A."/>
            <person name="Clark A.G."/>
            <person name="Waterman M.S."/>
            <person name="Eichler E.E."/>
            <person name="Adams M.D."/>
            <person name="Hunkapiller M.W."/>
            <person name="Myers E.W."/>
            <person name="Venter J.C."/>
        </authorList>
    </citation>
    <scope>NUCLEOTIDE SEQUENCE [LARGE SCALE GENOMIC DNA]</scope>
</reference>
<reference key="5">
    <citation type="journal article" date="2004" name="Genome Res.">
        <title>The status, quality, and expansion of the NIH full-length cDNA project: the Mammalian Gene Collection (MGC).</title>
        <authorList>
            <consortium name="The MGC Project Team"/>
        </authorList>
    </citation>
    <scope>NUCLEOTIDE SEQUENCE [LARGE SCALE MRNA]</scope>
</reference>
<reference key="6">
    <citation type="journal article" date="2004" name="Genomics">
        <title>Eleven daughters of NANOG.</title>
        <authorList>
            <person name="Booth H.A."/>
            <person name="Holland P.W."/>
        </authorList>
    </citation>
    <scope>GENE FAMILY</scope>
</reference>
<reference key="7">
    <citation type="journal article" date="2006" name="BMC Evol. Biol.">
        <title>Evolution of the NANOG pseudogene family in the human and chimpanzee genomes.</title>
        <authorList>
            <person name="Fairbanks D.J."/>
            <person name="Maughan P.J."/>
        </authorList>
    </citation>
    <scope>GENE FAMILY</scope>
</reference>
<sequence>MSVDPACPQSLPCFEESDCKESSPMPVICGPEENYPSLQMSSAEMPHTETVSPLPSSMDLLIQDSPDSSTSPKGKQPTSAENSVAKKEDKVPVKKQKTRTVFSSTQLCVLNDRFQRQKYLSLQQMQELSNILNLSYKQVKTWFQNQRMKSKRWQKNNWPKNSNGVTQKASAPTYPSLYSSYHQGCLVNPTGNLPMWSNQTWNNSTWSNQTQNIQSWSNHSWNTQTWCTQSWNNQAWNSPFYNCGEESLQSCMHFQPNSPASDLEAALEAAGEGLNVIQQTTRYFSTPQTMDLFLNYSMNMQPEDV</sequence>
<comment type="function">
    <text evidence="1 4">May act as a transcription regulator (By similarity). When overexpressed, promotes entry of cells into S phase and cell proliferation.</text>
</comment>
<comment type="subcellular location">
    <subcellularLocation>
        <location evidence="2 4">Nucleus</location>
    </subcellularLocation>
</comment>
<comment type="similarity">
    <text evidence="6">Belongs to the Nanog homeobox family.</text>
</comment>
<dbReference type="EMBL" id="JX104830">
    <property type="protein sequence ID" value="AFP90859.1"/>
    <property type="molecule type" value="Genomic_DNA"/>
</dbReference>
<dbReference type="EMBL" id="JX104831">
    <property type="protein sequence ID" value="AFP90860.1"/>
    <property type="molecule type" value="Genomic_DNA"/>
</dbReference>
<dbReference type="EMBL" id="JX104832">
    <property type="protein sequence ID" value="AFP90861.1"/>
    <property type="molecule type" value="Genomic_DNA"/>
</dbReference>
<dbReference type="EMBL" id="JX104833">
    <property type="protein sequence ID" value="AFP90862.1"/>
    <property type="molecule type" value="Genomic_DNA"/>
</dbReference>
<dbReference type="EMBL" id="JX104834">
    <property type="protein sequence ID" value="AFP90863.1"/>
    <property type="molecule type" value="Genomic_DNA"/>
</dbReference>
<dbReference type="EMBL" id="JX104835">
    <property type="protein sequence ID" value="AFP90864.1"/>
    <property type="molecule type" value="Genomic_DNA"/>
</dbReference>
<dbReference type="EMBL" id="JX104836">
    <property type="protein sequence ID" value="AFP90865.1"/>
    <property type="molecule type" value="Genomic_DNA"/>
</dbReference>
<dbReference type="EMBL" id="JX104837">
    <property type="protein sequence ID" value="AFP90866.1"/>
    <property type="molecule type" value="Genomic_DNA"/>
</dbReference>
<dbReference type="EMBL" id="JX104838">
    <property type="protein sequence ID" value="AFP90867.1"/>
    <property type="molecule type" value="Genomic_DNA"/>
</dbReference>
<dbReference type="EMBL" id="JX104839">
    <property type="protein sequence ID" value="AFP90868.1"/>
    <property type="molecule type" value="Genomic_DNA"/>
</dbReference>
<dbReference type="EMBL" id="JX104840">
    <property type="protein sequence ID" value="AFP90869.1"/>
    <property type="molecule type" value="Genomic_DNA"/>
</dbReference>
<dbReference type="EMBL" id="JX104841">
    <property type="protein sequence ID" value="AFP90870.1"/>
    <property type="molecule type" value="Genomic_DNA"/>
</dbReference>
<dbReference type="EMBL" id="JX104842">
    <property type="protein sequence ID" value="AFP90871.1"/>
    <property type="molecule type" value="Genomic_DNA"/>
</dbReference>
<dbReference type="EMBL" id="JX104843">
    <property type="protein sequence ID" value="AFP90872.1"/>
    <property type="molecule type" value="Genomic_DNA"/>
</dbReference>
<dbReference type="EMBL" id="JX104844">
    <property type="protein sequence ID" value="AFP90873.1"/>
    <property type="molecule type" value="Genomic_DNA"/>
</dbReference>
<dbReference type="EMBL" id="JX104845">
    <property type="protein sequence ID" value="AFP90874.1"/>
    <property type="molecule type" value="Genomic_DNA"/>
</dbReference>
<dbReference type="EMBL" id="JX104846">
    <property type="protein sequence ID" value="AFP90875.1"/>
    <property type="molecule type" value="Genomic_DNA"/>
</dbReference>
<dbReference type="EMBL" id="JX104847">
    <property type="protein sequence ID" value="AFP90876.1"/>
    <property type="molecule type" value="Genomic_DNA"/>
</dbReference>
<dbReference type="EMBL" id="JX104848">
    <property type="protein sequence ID" value="AFP90877.1"/>
    <property type="molecule type" value="Genomic_DNA"/>
</dbReference>
<dbReference type="EMBL" id="AC021231">
    <property type="status" value="NOT_ANNOTATED_CDS"/>
    <property type="molecule type" value="Genomic_DNA"/>
</dbReference>
<dbReference type="EMBL" id="CH471125">
    <property type="protein sequence ID" value="EAW92325.1"/>
    <property type="molecule type" value="Genomic_DNA"/>
</dbReference>
<dbReference type="EMBL" id="CH471125">
    <property type="protein sequence ID" value="EAW92326.1"/>
    <property type="molecule type" value="Genomic_DNA"/>
</dbReference>
<dbReference type="EMBL" id="BC069807">
    <property type="status" value="NOT_ANNOTATED_CDS"/>
    <property type="molecule type" value="mRNA"/>
</dbReference>
<dbReference type="EMBL" id="BC098275">
    <property type="status" value="NOT_ANNOTATED_CDS"/>
    <property type="molecule type" value="mRNA"/>
</dbReference>
<dbReference type="EMBL" id="BC099704">
    <property type="status" value="NOT_ANNOTATED_CDS"/>
    <property type="molecule type" value="mRNA"/>
</dbReference>
<dbReference type="CCDS" id="CCDS86444.1"/>
<dbReference type="RefSeq" id="NP_001342210.1">
    <property type="nucleotide sequence ID" value="NM_001355281.2"/>
</dbReference>
<dbReference type="BMRB" id="Q6NSW7"/>
<dbReference type="SMR" id="Q6NSW7"/>
<dbReference type="FunCoup" id="Q6NSW7">
    <property type="interactions" value="294"/>
</dbReference>
<dbReference type="IntAct" id="Q6NSW7">
    <property type="interactions" value="1"/>
</dbReference>
<dbReference type="STRING" id="9606.ENSP00000487073"/>
<dbReference type="BioMuta" id="NANOGP8"/>
<dbReference type="DMDM" id="74762336"/>
<dbReference type="jPOST" id="Q6NSW7"/>
<dbReference type="MassIVE" id="Q6NSW7"/>
<dbReference type="PeptideAtlas" id="Q6NSW7"/>
<dbReference type="ProteomicsDB" id="66643"/>
<dbReference type="Antibodypedia" id="78278">
    <property type="antibodies" value="23 antibodies from 9 providers"/>
</dbReference>
<dbReference type="Ensembl" id="ENST00000528386.4">
    <property type="protein sequence ID" value="ENSP00000487073.2"/>
    <property type="gene ID" value="ENSG00000255192.7"/>
</dbReference>
<dbReference type="GeneID" id="388112"/>
<dbReference type="MANE-Select" id="ENST00000528386.4">
    <property type="protein sequence ID" value="ENSP00000487073.2"/>
    <property type="RefSeq nucleotide sequence ID" value="NM_001355281.2"/>
    <property type="RefSeq protein sequence ID" value="NP_001342210.1"/>
</dbReference>
<dbReference type="UCSC" id="uc032bzh.2">
    <property type="organism name" value="human"/>
</dbReference>
<dbReference type="AGR" id="HGNC:23106"/>
<dbReference type="GeneCards" id="NANOGP8"/>
<dbReference type="HGNC" id="HGNC:23106">
    <property type="gene designation" value="NANOGP8"/>
</dbReference>
<dbReference type="HPA" id="ENSG00000255192">
    <property type="expression patterns" value="Not detected"/>
</dbReference>
<dbReference type="neXtProt" id="NX_Q6NSW7"/>
<dbReference type="OpenTargets" id="ENSG00000255192"/>
<dbReference type="VEuPathDB" id="HostDB:ENSG00000255192"/>
<dbReference type="GeneTree" id="ENSGT00670000098076"/>
<dbReference type="InParanoid" id="Q6NSW7"/>
<dbReference type="OMA" id="QMCSAEM"/>
<dbReference type="OrthoDB" id="6159439at2759"/>
<dbReference type="PAN-GO" id="Q6NSW7">
    <property type="GO annotations" value="3 GO annotations based on evolutionary models"/>
</dbReference>
<dbReference type="PhylomeDB" id="Q6NSW7"/>
<dbReference type="PathwayCommons" id="Q6NSW7"/>
<dbReference type="SignaLink" id="Q6NSW7"/>
<dbReference type="SIGNOR" id="Q6NSW7"/>
<dbReference type="Pharos" id="Q6NSW7">
    <property type="development level" value="Tdark"/>
</dbReference>
<dbReference type="PRO" id="PR:Q6NSW7"/>
<dbReference type="Proteomes" id="UP000005640">
    <property type="component" value="Chromosome 15"/>
</dbReference>
<dbReference type="RNAct" id="Q6NSW7">
    <property type="molecule type" value="protein"/>
</dbReference>
<dbReference type="Bgee" id="ENSG00000255192">
    <property type="expression patterns" value="Expressed in primordial germ cell in gonad and 57 other cell types or tissues"/>
</dbReference>
<dbReference type="ExpressionAtlas" id="Q6NSW7">
    <property type="expression patterns" value="baseline and differential"/>
</dbReference>
<dbReference type="GO" id="GO:0043231">
    <property type="term" value="C:intracellular membrane-bounded organelle"/>
    <property type="evidence" value="ECO:0000314"/>
    <property type="project" value="HPA"/>
</dbReference>
<dbReference type="GO" id="GO:0005654">
    <property type="term" value="C:nucleoplasm"/>
    <property type="evidence" value="ECO:0000314"/>
    <property type="project" value="HPA"/>
</dbReference>
<dbReference type="GO" id="GO:0005634">
    <property type="term" value="C:nucleus"/>
    <property type="evidence" value="ECO:0000314"/>
    <property type="project" value="UniProtKB"/>
</dbReference>
<dbReference type="GO" id="GO:0000981">
    <property type="term" value="F:DNA-binding transcription factor activity, RNA polymerase II-specific"/>
    <property type="evidence" value="ECO:0000318"/>
    <property type="project" value="GO_Central"/>
</dbReference>
<dbReference type="GO" id="GO:0000978">
    <property type="term" value="F:RNA polymerase II cis-regulatory region sequence-specific DNA binding"/>
    <property type="evidence" value="ECO:0000318"/>
    <property type="project" value="GO_Central"/>
</dbReference>
<dbReference type="GO" id="GO:0030154">
    <property type="term" value="P:cell differentiation"/>
    <property type="evidence" value="ECO:0000318"/>
    <property type="project" value="GO_Central"/>
</dbReference>
<dbReference type="GO" id="GO:1902808">
    <property type="term" value="P:positive regulation of cell cycle G1/S phase transition"/>
    <property type="evidence" value="ECO:0000314"/>
    <property type="project" value="UniProtKB"/>
</dbReference>
<dbReference type="GO" id="GO:0008284">
    <property type="term" value="P:positive regulation of cell population proliferation"/>
    <property type="evidence" value="ECO:0000314"/>
    <property type="project" value="UniProtKB"/>
</dbReference>
<dbReference type="GO" id="GO:0006357">
    <property type="term" value="P:regulation of transcription by RNA polymerase II"/>
    <property type="evidence" value="ECO:0000318"/>
    <property type="project" value="GO_Central"/>
</dbReference>
<dbReference type="GO" id="GO:0019827">
    <property type="term" value="P:stem cell population maintenance"/>
    <property type="evidence" value="ECO:0000318"/>
    <property type="project" value="GO_Central"/>
</dbReference>
<dbReference type="CDD" id="cd00086">
    <property type="entry name" value="homeodomain"/>
    <property type="match status" value="1"/>
</dbReference>
<dbReference type="FunFam" id="1.10.10.60:FF:000203">
    <property type="entry name" value="Nanog homeobox transcription factor"/>
    <property type="match status" value="1"/>
</dbReference>
<dbReference type="Gene3D" id="1.10.10.60">
    <property type="entry name" value="Homeodomain-like"/>
    <property type="match status" value="1"/>
</dbReference>
<dbReference type="InterPro" id="IPR050460">
    <property type="entry name" value="Distal-less_Homeobox_TF"/>
</dbReference>
<dbReference type="InterPro" id="IPR001356">
    <property type="entry name" value="HD"/>
</dbReference>
<dbReference type="InterPro" id="IPR017970">
    <property type="entry name" value="Homeobox_CS"/>
</dbReference>
<dbReference type="InterPro" id="IPR009057">
    <property type="entry name" value="Homeodomain-like_sf"/>
</dbReference>
<dbReference type="PANTHER" id="PTHR24327">
    <property type="entry name" value="HOMEOBOX PROTEIN"/>
    <property type="match status" value="1"/>
</dbReference>
<dbReference type="PANTHER" id="PTHR24327:SF79">
    <property type="entry name" value="HOMEOBOX PROTEIN NANOG-RELATED"/>
    <property type="match status" value="1"/>
</dbReference>
<dbReference type="Pfam" id="PF00046">
    <property type="entry name" value="Homeodomain"/>
    <property type="match status" value="1"/>
</dbReference>
<dbReference type="SMART" id="SM00389">
    <property type="entry name" value="HOX"/>
    <property type="match status" value="1"/>
</dbReference>
<dbReference type="SUPFAM" id="SSF46689">
    <property type="entry name" value="Homeodomain-like"/>
    <property type="match status" value="1"/>
</dbReference>
<dbReference type="PROSITE" id="PS00027">
    <property type="entry name" value="HOMEOBOX_1"/>
    <property type="match status" value="1"/>
</dbReference>
<dbReference type="PROSITE" id="PS50071">
    <property type="entry name" value="HOMEOBOX_2"/>
    <property type="match status" value="1"/>
</dbReference>
<gene>
    <name type="primary">NANOGP8</name>
</gene>